<comment type="function">
    <text evidence="1">Damages membranes of susceptible bacteria. Has no hemolytic activity. Not toxic to mice. Does not inhibit the proteinases elastase and cathepsin G.</text>
</comment>
<comment type="subcellular location">
    <subcellularLocation>
        <location evidence="3">Secreted</location>
    </subcellularLocation>
</comment>
<comment type="tissue specificity">
    <text evidence="6">Expressed by the venom gland.</text>
</comment>
<comment type="mass spectrometry" mass="5288.5" error="0.08" method="Electrospray" evidence="3"/>
<comment type="similarity">
    <text evidence="5">Belongs to the venom waprin family.</text>
</comment>
<accession>P60589</accession>
<accession>P83769</accession>
<feature type="chain" id="PRO_0000188988" description="Nawaprin">
    <location>
        <begin position="1"/>
        <end position="51"/>
    </location>
</feature>
<feature type="domain" description="WAP" evidence="2">
    <location>
        <begin position="1"/>
        <end position="50"/>
    </location>
</feature>
<feature type="disulfide bond" evidence="2 3">
    <location>
        <begin position="7"/>
        <end position="37"/>
    </location>
</feature>
<feature type="disulfide bond" evidence="2 3">
    <location>
        <begin position="20"/>
        <end position="41"/>
    </location>
</feature>
<feature type="disulfide bond" evidence="2 3">
    <location>
        <begin position="24"/>
        <end position="36"/>
    </location>
</feature>
<feature type="disulfide bond" evidence="2 3">
    <location>
        <begin position="30"/>
        <end position="46"/>
    </location>
</feature>
<feature type="strand" evidence="7">
    <location>
        <begin position="4"/>
        <end position="6"/>
    </location>
</feature>
<feature type="helix" evidence="7">
    <location>
        <begin position="27"/>
        <end position="29"/>
    </location>
</feature>
<feature type="strand" evidence="7">
    <location>
        <begin position="35"/>
        <end position="37"/>
    </location>
</feature>
<feature type="strand" evidence="7">
    <location>
        <begin position="40"/>
        <end position="43"/>
    </location>
</feature>
<feature type="strand" evidence="7">
    <location>
        <begin position="45"/>
        <end position="47"/>
    </location>
</feature>
<organism>
    <name type="scientific">Naja nigricollis</name>
    <name type="common">Black-necked spitting cobra</name>
    <dbReference type="NCBI Taxonomy" id="8654"/>
    <lineage>
        <taxon>Eukaryota</taxon>
        <taxon>Metazoa</taxon>
        <taxon>Chordata</taxon>
        <taxon>Craniata</taxon>
        <taxon>Vertebrata</taxon>
        <taxon>Euteleostomi</taxon>
        <taxon>Lepidosauria</taxon>
        <taxon>Squamata</taxon>
        <taxon>Bifurcata</taxon>
        <taxon>Unidentata</taxon>
        <taxon>Episquamata</taxon>
        <taxon>Toxicofera</taxon>
        <taxon>Serpentes</taxon>
        <taxon>Colubroidea</taxon>
        <taxon>Elapidae</taxon>
        <taxon>Elapinae</taxon>
        <taxon>Naja</taxon>
    </lineage>
</organism>
<name>WAPN_NAJNG</name>
<protein>
    <recommendedName>
        <fullName evidence="4">Nawaprin</fullName>
    </recommendedName>
</protein>
<keyword id="KW-0002">3D-structure</keyword>
<keyword id="KW-0044">Antibiotic</keyword>
<keyword id="KW-0929">Antimicrobial</keyword>
<keyword id="KW-0903">Direct protein sequencing</keyword>
<keyword id="KW-1015">Disulfide bond</keyword>
<keyword id="KW-0964">Secreted</keyword>
<sequence length="51" mass="5296">NEKSGSCPDMSMPIPPLGICKTLCNSDSGCPNVQKCCKNGCGFMTCTTPVP</sequence>
<evidence type="ECO:0000250" key="1">
    <source>
        <dbReference type="UniProtKB" id="P83952"/>
    </source>
</evidence>
<evidence type="ECO:0000255" key="2">
    <source>
        <dbReference type="PROSITE-ProRule" id="PRU00722"/>
    </source>
</evidence>
<evidence type="ECO:0000269" key="3">
    <source>
    </source>
</evidence>
<evidence type="ECO:0000303" key="4">
    <source>
    </source>
</evidence>
<evidence type="ECO:0000305" key="5"/>
<evidence type="ECO:0000305" key="6">
    <source>
    </source>
</evidence>
<evidence type="ECO:0007829" key="7">
    <source>
        <dbReference type="PDB" id="1UDK"/>
    </source>
</evidence>
<proteinExistence type="evidence at protein level"/>
<reference key="1">
    <citation type="journal article" date="2003" name="J. Biol. Chem.">
        <title>Identification of a novel family of proteins in snake venoms. Purification and structural characterization of nawaprin from Naja nigricollis snake venom.</title>
        <authorList>
            <person name="Torres A.M."/>
            <person name="Wong H.Y."/>
            <person name="Desai M."/>
            <person name="Moochhala S."/>
            <person name="Kuchel P.W."/>
            <person name="Kini R.M."/>
        </authorList>
    </citation>
    <scope>PROTEIN SEQUENCE</scope>
    <scope>MASS SPECTROMETRY</scope>
    <scope>DISULFIDE BONDS</scope>
    <scope>STRUCTURE BY NMR</scope>
    <scope>SUBCELLULAR LOCATION</scope>
    <source>
        <tissue>Venom</tissue>
    </source>
</reference>
<dbReference type="PDB" id="1UDK">
    <property type="method" value="NMR"/>
    <property type="chains" value="A=1-51"/>
</dbReference>
<dbReference type="PDBsum" id="1UDK"/>
<dbReference type="SMR" id="P60589"/>
<dbReference type="MEROPS" id="I17.004"/>
<dbReference type="EvolutionaryTrace" id="P60589"/>
<dbReference type="GO" id="GO:0005576">
    <property type="term" value="C:extracellular region"/>
    <property type="evidence" value="ECO:0000250"/>
    <property type="project" value="UniProtKB"/>
</dbReference>
<dbReference type="GO" id="GO:0030414">
    <property type="term" value="F:peptidase inhibitor activity"/>
    <property type="evidence" value="ECO:0007669"/>
    <property type="project" value="InterPro"/>
</dbReference>
<dbReference type="GO" id="GO:0042742">
    <property type="term" value="P:defense response to bacterium"/>
    <property type="evidence" value="ECO:0007669"/>
    <property type="project" value="UniProtKB-KW"/>
</dbReference>
<dbReference type="GO" id="GO:0044278">
    <property type="term" value="P:venom-mediated disruption of cell wall in another organism"/>
    <property type="evidence" value="ECO:0000250"/>
    <property type="project" value="UniProtKB"/>
</dbReference>
<dbReference type="FunFam" id="4.10.75.10:FF:000001">
    <property type="entry name" value="Anosmin 1"/>
    <property type="match status" value="1"/>
</dbReference>
<dbReference type="Gene3D" id="4.10.75.10">
    <property type="entry name" value="Elafin-like"/>
    <property type="match status" value="1"/>
</dbReference>
<dbReference type="InterPro" id="IPR036645">
    <property type="entry name" value="Elafin-like_sf"/>
</dbReference>
<dbReference type="InterPro" id="IPR008197">
    <property type="entry name" value="WAP_dom"/>
</dbReference>
<dbReference type="Pfam" id="PF00095">
    <property type="entry name" value="WAP"/>
    <property type="match status" value="1"/>
</dbReference>
<dbReference type="SMART" id="SM00217">
    <property type="entry name" value="WAP"/>
    <property type="match status" value="1"/>
</dbReference>
<dbReference type="SUPFAM" id="SSF57256">
    <property type="entry name" value="Elafin-like"/>
    <property type="match status" value="1"/>
</dbReference>
<dbReference type="PROSITE" id="PS51390">
    <property type="entry name" value="WAP"/>
    <property type="match status" value="1"/>
</dbReference>